<dbReference type="EC" id="3.4.24.-" evidence="1"/>
<dbReference type="EMBL" id="FO080299">
    <property type="protein sequence ID" value="CCD62714.1"/>
    <property type="molecule type" value="Genomic_DNA"/>
</dbReference>
<dbReference type="EMBL" id="AJ561208">
    <property type="protein sequence ID" value="CAD99210.1"/>
    <property type="molecule type" value="mRNA"/>
</dbReference>
<dbReference type="PIR" id="B89451">
    <property type="entry name" value="B89451"/>
</dbReference>
<dbReference type="RefSeq" id="NP_508154.2">
    <property type="nucleotide sequence ID" value="NM_075753.8"/>
</dbReference>
<dbReference type="SMR" id="P55115"/>
<dbReference type="BioGRID" id="45379">
    <property type="interactions" value="1"/>
</dbReference>
<dbReference type="FunCoup" id="P55115">
    <property type="interactions" value="1"/>
</dbReference>
<dbReference type="STRING" id="6239.T04G9.2.1"/>
<dbReference type="MEROPS" id="M12.A41"/>
<dbReference type="GlyCosmos" id="P55115">
    <property type="glycosylation" value="1 site, No reported glycans"/>
</dbReference>
<dbReference type="PaxDb" id="6239-T04G9.2"/>
<dbReference type="PeptideAtlas" id="P55115"/>
<dbReference type="EnsemblMetazoa" id="T04G9.2.1">
    <property type="protein sequence ID" value="T04G9.2.1"/>
    <property type="gene ID" value="WBGene00003534"/>
</dbReference>
<dbReference type="GeneID" id="180426"/>
<dbReference type="KEGG" id="cel:CELE_T04G9.2"/>
<dbReference type="UCSC" id="T04G9.2">
    <property type="organism name" value="c. elegans"/>
</dbReference>
<dbReference type="AGR" id="WB:WBGene00003534"/>
<dbReference type="CTD" id="180426"/>
<dbReference type="WormBase" id="T04G9.2">
    <property type="protein sequence ID" value="CE38541"/>
    <property type="gene ID" value="WBGene00003534"/>
    <property type="gene designation" value="nas-15"/>
</dbReference>
<dbReference type="eggNOG" id="KOG3714">
    <property type="taxonomic scope" value="Eukaryota"/>
</dbReference>
<dbReference type="HOGENOM" id="CLU_017286_0_1_1"/>
<dbReference type="InParanoid" id="P55115"/>
<dbReference type="OMA" id="GFCEGIF"/>
<dbReference type="OrthoDB" id="291007at2759"/>
<dbReference type="PhylomeDB" id="P55115"/>
<dbReference type="PRO" id="PR:P55115"/>
<dbReference type="Proteomes" id="UP000001940">
    <property type="component" value="Chromosome X"/>
</dbReference>
<dbReference type="Bgee" id="WBGene00003534">
    <property type="expression patterns" value="Expressed in pharyngeal muscle cell (C elegans) and 3 other cell types or tissues"/>
</dbReference>
<dbReference type="GO" id="GO:0005576">
    <property type="term" value="C:extracellular region"/>
    <property type="evidence" value="ECO:0007669"/>
    <property type="project" value="UniProtKB-SubCell"/>
</dbReference>
<dbReference type="GO" id="GO:0004222">
    <property type="term" value="F:metalloendopeptidase activity"/>
    <property type="evidence" value="ECO:0000318"/>
    <property type="project" value="GO_Central"/>
</dbReference>
<dbReference type="GO" id="GO:0008270">
    <property type="term" value="F:zinc ion binding"/>
    <property type="evidence" value="ECO:0007669"/>
    <property type="project" value="InterPro"/>
</dbReference>
<dbReference type="GO" id="GO:0006508">
    <property type="term" value="P:proteolysis"/>
    <property type="evidence" value="ECO:0007669"/>
    <property type="project" value="UniProtKB-KW"/>
</dbReference>
<dbReference type="CDD" id="cd04280">
    <property type="entry name" value="ZnMc_astacin_like"/>
    <property type="match status" value="1"/>
</dbReference>
<dbReference type="FunFam" id="3.40.390.10:FF:000015">
    <property type="entry name" value="Meprin A subunit"/>
    <property type="match status" value="1"/>
</dbReference>
<dbReference type="FunFam" id="1.10.10.1940:FF:000005">
    <property type="entry name" value="Metalloendopeptidase"/>
    <property type="match status" value="1"/>
</dbReference>
<dbReference type="Gene3D" id="1.10.10.1940">
    <property type="match status" value="2"/>
</dbReference>
<dbReference type="Gene3D" id="3.40.390.10">
    <property type="entry name" value="Collagenase (Catalytic Domain)"/>
    <property type="match status" value="1"/>
</dbReference>
<dbReference type="InterPro" id="IPR034035">
    <property type="entry name" value="Astacin-like_dom"/>
</dbReference>
<dbReference type="InterPro" id="IPR024079">
    <property type="entry name" value="MetalloPept_cat_dom_sf"/>
</dbReference>
<dbReference type="InterPro" id="IPR001506">
    <property type="entry name" value="Peptidase_M12A"/>
</dbReference>
<dbReference type="InterPro" id="IPR006026">
    <property type="entry name" value="Peptidase_Metallo"/>
</dbReference>
<dbReference type="InterPro" id="IPR003582">
    <property type="entry name" value="ShKT_dom"/>
</dbReference>
<dbReference type="PANTHER" id="PTHR10127">
    <property type="entry name" value="DISCOIDIN, CUB, EGF, LAMININ , AND ZINC METALLOPROTEASE DOMAIN CONTAINING"/>
    <property type="match status" value="1"/>
</dbReference>
<dbReference type="PANTHER" id="PTHR10127:SF897">
    <property type="entry name" value="ZINC METALLOPROTEINASE NAS-15"/>
    <property type="match status" value="1"/>
</dbReference>
<dbReference type="Pfam" id="PF01400">
    <property type="entry name" value="Astacin"/>
    <property type="match status" value="1"/>
</dbReference>
<dbReference type="Pfam" id="PF01549">
    <property type="entry name" value="ShK"/>
    <property type="match status" value="3"/>
</dbReference>
<dbReference type="PRINTS" id="PR00480">
    <property type="entry name" value="ASTACIN"/>
</dbReference>
<dbReference type="SMART" id="SM00254">
    <property type="entry name" value="ShKT"/>
    <property type="match status" value="3"/>
</dbReference>
<dbReference type="SMART" id="SM00235">
    <property type="entry name" value="ZnMc"/>
    <property type="match status" value="1"/>
</dbReference>
<dbReference type="SUPFAM" id="SSF55486">
    <property type="entry name" value="Metalloproteases ('zincins'), catalytic domain"/>
    <property type="match status" value="1"/>
</dbReference>
<dbReference type="PROSITE" id="PS51864">
    <property type="entry name" value="ASTACIN"/>
    <property type="match status" value="1"/>
</dbReference>
<dbReference type="PROSITE" id="PS51670">
    <property type="entry name" value="SHKT"/>
    <property type="match status" value="3"/>
</dbReference>
<dbReference type="PROSITE" id="PS00142">
    <property type="entry name" value="ZINC_PROTEASE"/>
    <property type="match status" value="1"/>
</dbReference>
<protein>
    <recommendedName>
        <fullName>Zinc metalloproteinase nas-15</fullName>
        <ecNumber evidence="1">3.4.24.-</ecNumber>
    </recommendedName>
    <alternativeName>
        <fullName>Nematode astacin 15</fullName>
    </alternativeName>
</protein>
<proteinExistence type="evidence at transcript level"/>
<evidence type="ECO:0000250" key="1">
    <source>
        <dbReference type="UniProtKB" id="A8Q2D1"/>
    </source>
</evidence>
<evidence type="ECO:0000250" key="2">
    <source>
        <dbReference type="UniProtKB" id="P07584"/>
    </source>
</evidence>
<evidence type="ECO:0000255" key="3"/>
<evidence type="ECO:0000255" key="4">
    <source>
        <dbReference type="PROSITE-ProRule" id="PRU01005"/>
    </source>
</evidence>
<evidence type="ECO:0000255" key="5">
    <source>
        <dbReference type="PROSITE-ProRule" id="PRU01211"/>
    </source>
</evidence>
<evidence type="ECO:0000256" key="6">
    <source>
        <dbReference type="SAM" id="MobiDB-lite"/>
    </source>
</evidence>
<evidence type="ECO:0000269" key="7">
    <source>
    </source>
</evidence>
<evidence type="ECO:0000305" key="8"/>
<comment type="function">
    <text evidence="2">Metalloprotease.</text>
</comment>
<comment type="cofactor">
    <cofactor evidence="5">
        <name>Zn(2+)</name>
        <dbReference type="ChEBI" id="CHEBI:29105"/>
    </cofactor>
    <text evidence="5">Binds 1 zinc ion per subunit.</text>
</comment>
<comment type="subcellular location">
    <subcellularLocation>
        <location evidence="8">Secreted</location>
    </subcellularLocation>
</comment>
<comment type="tissue specificity">
    <text evidence="7">Expressed in pharyngeal marginal cells and muscles.</text>
</comment>
<name>NAS15_CAEEL</name>
<reference key="1">
    <citation type="journal article" date="1998" name="Science">
        <title>Genome sequence of the nematode C. elegans: a platform for investigating biology.</title>
        <authorList>
            <consortium name="The C. elegans sequencing consortium"/>
        </authorList>
    </citation>
    <scope>NUCLEOTIDE SEQUENCE [LARGE SCALE GENOMIC DNA]</scope>
    <source>
        <strain>Bristol N2</strain>
    </source>
</reference>
<reference key="2">
    <citation type="journal article" date="2003" name="Eur. J. Biochem.">
        <title>The astacin protein family in Caenorhabditis elegans.</title>
        <authorList>
            <person name="Moehrlen F."/>
            <person name="Hutter H."/>
            <person name="Zwilling R."/>
        </authorList>
    </citation>
    <scope>NUCLEOTIDE SEQUENCE [MRNA] OF 107-384</scope>
    <scope>NOMENCLATURE</scope>
    <source>
        <strain>Bristol N2</strain>
    </source>
</reference>
<reference key="3">
    <citation type="journal article" date="2010" name="BMC Dev. Biol.">
        <title>Characterization of the astacin family of metalloproteases in C. elegans.</title>
        <authorList>
            <person name="Park J.O."/>
            <person name="Pan J."/>
            <person name="Moehrlen F."/>
            <person name="Schupp M.O."/>
            <person name="Johnsen R."/>
            <person name="Baillie D.L."/>
            <person name="Zapf R."/>
            <person name="Moerman D.G."/>
            <person name="Hutter H."/>
        </authorList>
    </citation>
    <scope>TISSUE SPECIFICITY</scope>
</reference>
<keyword id="KW-1015">Disulfide bond</keyword>
<keyword id="KW-0325">Glycoprotein</keyword>
<keyword id="KW-0378">Hydrolase</keyword>
<keyword id="KW-0479">Metal-binding</keyword>
<keyword id="KW-0482">Metalloprotease</keyword>
<keyword id="KW-0645">Protease</keyword>
<keyword id="KW-1185">Reference proteome</keyword>
<keyword id="KW-0677">Repeat</keyword>
<keyword id="KW-0964">Secreted</keyword>
<keyword id="KW-0732">Signal</keyword>
<keyword id="KW-0862">Zinc</keyword>
<keyword id="KW-0865">Zymogen</keyword>
<accession>P55115</accession>
<accession>Q7Z0N1</accession>
<organism>
    <name type="scientific">Caenorhabditis elegans</name>
    <dbReference type="NCBI Taxonomy" id="6239"/>
    <lineage>
        <taxon>Eukaryota</taxon>
        <taxon>Metazoa</taxon>
        <taxon>Ecdysozoa</taxon>
        <taxon>Nematoda</taxon>
        <taxon>Chromadorea</taxon>
        <taxon>Rhabditida</taxon>
        <taxon>Rhabditina</taxon>
        <taxon>Rhabditomorpha</taxon>
        <taxon>Rhabditoidea</taxon>
        <taxon>Rhabditidae</taxon>
        <taxon>Peloderinae</taxon>
        <taxon>Caenorhabditis</taxon>
    </lineage>
</organism>
<gene>
    <name type="primary">nas-15</name>
    <name type="ORF">T04G9.2</name>
</gene>
<sequence>MREYVLIFLVAPVFAAILGPYDIPPELPPLNDENFFDRSHSEYETVLTPEDFELGTRITAAMAHDNGDDIWDSDAMYSKDRFEGDIANDNLNASTAELFANGGSGKSEDGKWYNAIKNRLQLWPEGRIPYTISSQYSSYSRSLIAASMQEYASHTCIRWVPKEAADVNYVHIYPDRGCYSMVGKMGGKQSLSLGSGCIQKGIILHELMHAVGFFHEQSRTDRDDHITIMWNNIQAGMQGQFEKYGHGTIQSLGTGYDYGSIMHYGTKAFSRNGQPTMIPKKNGATIGQRNGFSKVDKFKINTLYGCPVEGEKPTTSAPTSGPIVITVKPVVITTGKPPVIQTVSPAVPLKPSECRNLRGDCDDLAKQGWCIRNPGWMRANCPISCGMCIPTKETQKPYVQTTTQAATTTARPQKPVTQPIQPLPPVPPLPPTTPEDCEDLRVDCLVLVSQRYCKISQNFMKSYCAKSCGFCFKPPPTEIPDNRPTVVTTRPLVTLPPAVIRSRSPAPPVSTTTKAAPTTSTTSAAPYSPTPLPSECSDRKHFCSHWKSAGFCEGIFMNYMKKNCPASCGLC</sequence>
<feature type="signal peptide" evidence="3">
    <location>
        <begin position="1"/>
        <end position="15"/>
    </location>
</feature>
<feature type="propeptide" id="PRO_0000442662" evidence="8">
    <location>
        <begin position="16"/>
        <end status="unknown"/>
    </location>
</feature>
<feature type="chain" id="PRO_0000028919" description="Zinc metalloproteinase nas-15">
    <location>
        <begin status="unknown"/>
        <end position="571"/>
    </location>
</feature>
<feature type="domain" description="Peptidase M12A" evidence="5">
    <location>
        <begin position="114"/>
        <end position="307"/>
    </location>
</feature>
<feature type="domain" description="ShKT 1" evidence="4">
    <location>
        <begin position="354"/>
        <end position="388"/>
    </location>
</feature>
<feature type="domain" description="ShKT 2" evidence="4">
    <location>
        <begin position="437"/>
        <end position="471"/>
    </location>
</feature>
<feature type="domain" description="ShKT 3" evidence="4">
    <location>
        <begin position="536"/>
        <end position="571"/>
    </location>
</feature>
<feature type="region of interest" description="Disordered" evidence="6">
    <location>
        <begin position="407"/>
        <end position="426"/>
    </location>
</feature>
<feature type="region of interest" description="Disordered" evidence="6">
    <location>
        <begin position="500"/>
        <end position="530"/>
    </location>
</feature>
<feature type="compositionally biased region" description="Low complexity" evidence="6">
    <location>
        <begin position="407"/>
        <end position="420"/>
    </location>
</feature>
<feature type="compositionally biased region" description="Low complexity" evidence="6">
    <location>
        <begin position="509"/>
        <end position="527"/>
    </location>
</feature>
<feature type="active site" evidence="5">
    <location>
        <position position="206"/>
    </location>
</feature>
<feature type="binding site" evidence="5">
    <location>
        <position position="205"/>
    </location>
    <ligand>
        <name>Zn(2+)</name>
        <dbReference type="ChEBI" id="CHEBI:29105"/>
        <note>catalytic</note>
    </ligand>
</feature>
<feature type="binding site" evidence="5">
    <location>
        <position position="209"/>
    </location>
    <ligand>
        <name>Zn(2+)</name>
        <dbReference type="ChEBI" id="CHEBI:29105"/>
        <note>catalytic</note>
    </ligand>
</feature>
<feature type="binding site" evidence="5">
    <location>
        <position position="215"/>
    </location>
    <ligand>
        <name>Zn(2+)</name>
        <dbReference type="ChEBI" id="CHEBI:29105"/>
        <note>catalytic</note>
    </ligand>
</feature>
<feature type="glycosylation site" description="N-linked (GlcNAc...) asparagine" evidence="3">
    <location>
        <position position="92"/>
    </location>
</feature>
<feature type="disulfide bond" evidence="5">
    <location>
        <begin position="156"/>
        <end position="306"/>
    </location>
</feature>
<feature type="disulfide bond" evidence="5">
    <location>
        <begin position="178"/>
        <end position="197"/>
    </location>
</feature>
<feature type="disulfide bond" evidence="4">
    <location>
        <begin position="354"/>
        <end position="388"/>
    </location>
</feature>
<feature type="disulfide bond" evidence="4">
    <location>
        <begin position="361"/>
        <end position="381"/>
    </location>
</feature>
<feature type="disulfide bond" evidence="4">
    <location>
        <begin position="370"/>
        <end position="385"/>
    </location>
</feature>
<feature type="disulfide bond" evidence="4">
    <location>
        <begin position="437"/>
        <end position="471"/>
    </location>
</feature>
<feature type="disulfide bond" evidence="4">
    <location>
        <begin position="444"/>
        <end position="464"/>
    </location>
</feature>
<feature type="disulfide bond" evidence="4">
    <location>
        <begin position="453"/>
        <end position="468"/>
    </location>
</feature>
<feature type="disulfide bond" evidence="4">
    <location>
        <begin position="536"/>
        <end position="571"/>
    </location>
</feature>
<feature type="disulfide bond" evidence="4">
    <location>
        <begin position="543"/>
        <end position="564"/>
    </location>
</feature>
<feature type="disulfide bond" evidence="4">
    <location>
        <begin position="552"/>
        <end position="568"/>
    </location>
</feature>